<organism>
    <name type="scientific">Schizosaccharomyces pombe (strain 972 / ATCC 24843)</name>
    <name type="common">Fission yeast</name>
    <dbReference type="NCBI Taxonomy" id="284812"/>
    <lineage>
        <taxon>Eukaryota</taxon>
        <taxon>Fungi</taxon>
        <taxon>Dikarya</taxon>
        <taxon>Ascomycota</taxon>
        <taxon>Taphrinomycotina</taxon>
        <taxon>Schizosaccharomycetes</taxon>
        <taxon>Schizosaccharomycetales</taxon>
        <taxon>Schizosaccharomycetaceae</taxon>
        <taxon>Schizosaccharomyces</taxon>
    </lineage>
</organism>
<dbReference type="EMBL" id="CU329672">
    <property type="protein sequence ID" value="CAA21820.3"/>
    <property type="molecule type" value="Genomic_DNA"/>
</dbReference>
<dbReference type="PIR" id="T41441">
    <property type="entry name" value="T41441"/>
</dbReference>
<dbReference type="RefSeq" id="NP_588224.1">
    <property type="nucleotide sequence ID" value="NM_001023214.2"/>
</dbReference>
<dbReference type="SMR" id="O94589"/>
<dbReference type="BioGRID" id="275581">
    <property type="interactions" value="12"/>
</dbReference>
<dbReference type="FunCoup" id="O94589">
    <property type="interactions" value="193"/>
</dbReference>
<dbReference type="STRING" id="284812.O94589"/>
<dbReference type="iPTMnet" id="O94589"/>
<dbReference type="PaxDb" id="4896-SPCC584.03c.1"/>
<dbReference type="EnsemblFungi" id="SPCC584.03c.1">
    <property type="protein sequence ID" value="SPCC584.03c.1:pep"/>
    <property type="gene ID" value="SPCC584.03c"/>
</dbReference>
<dbReference type="KEGG" id="spo:2539008"/>
<dbReference type="PomBase" id="SPCC584.03c"/>
<dbReference type="VEuPathDB" id="FungiDB:SPCC584.03c"/>
<dbReference type="eggNOG" id="ENOG502R7I3">
    <property type="taxonomic scope" value="Eukaryota"/>
</dbReference>
<dbReference type="HOGENOM" id="CLU_014536_0_0_1"/>
<dbReference type="InParanoid" id="O94589"/>
<dbReference type="OMA" id="QSMFFTA"/>
<dbReference type="PhylomeDB" id="O94589"/>
<dbReference type="PRO" id="PR:O94589"/>
<dbReference type="Proteomes" id="UP000002485">
    <property type="component" value="Chromosome III"/>
</dbReference>
<dbReference type="GO" id="GO:0005737">
    <property type="term" value="C:cytoplasm"/>
    <property type="evidence" value="ECO:0000318"/>
    <property type="project" value="GO_Central"/>
</dbReference>
<dbReference type="GO" id="GO:0005635">
    <property type="term" value="C:nuclear envelope"/>
    <property type="evidence" value="ECO:0007005"/>
    <property type="project" value="PomBase"/>
</dbReference>
<dbReference type="GO" id="GO:0005634">
    <property type="term" value="C:nucleus"/>
    <property type="evidence" value="ECO:0000318"/>
    <property type="project" value="GO_Central"/>
</dbReference>
<dbReference type="GO" id="GO:0005525">
    <property type="term" value="F:GTP binding"/>
    <property type="evidence" value="ECO:0000255"/>
    <property type="project" value="PomBase"/>
</dbReference>
<dbReference type="GO" id="GO:0030695">
    <property type="term" value="F:GTPase regulator activity"/>
    <property type="evidence" value="ECO:0000318"/>
    <property type="project" value="GO_Central"/>
</dbReference>
<dbReference type="InterPro" id="IPR008812">
    <property type="entry name" value="Ran_GTP-bd-rel"/>
</dbReference>
<dbReference type="PANTHER" id="PTHR31010">
    <property type="entry name" value="RAN-SPECIFIC GTPASE-ACTIVATING PROTEIN 30-RELATED"/>
    <property type="match status" value="1"/>
</dbReference>
<dbReference type="PANTHER" id="PTHR31010:SF3">
    <property type="entry name" value="RANBD1 DOMAIN-CONTAINING PROTEIN C584.03C"/>
    <property type="match status" value="1"/>
</dbReference>
<dbReference type="Pfam" id="PF05508">
    <property type="entry name" value="Ran-binding"/>
    <property type="match status" value="1"/>
</dbReference>
<name>YC93_SCHPO</name>
<evidence type="ECO:0000256" key="1">
    <source>
        <dbReference type="SAM" id="MobiDB-lite"/>
    </source>
</evidence>
<evidence type="ECO:0000269" key="2">
    <source>
    </source>
</evidence>
<evidence type="ECO:0000269" key="3">
    <source>
    </source>
</evidence>
<reference key="1">
    <citation type="journal article" date="2002" name="Nature">
        <title>The genome sequence of Schizosaccharomyces pombe.</title>
        <authorList>
            <person name="Wood V."/>
            <person name="Gwilliam R."/>
            <person name="Rajandream M.A."/>
            <person name="Lyne M.H."/>
            <person name="Lyne R."/>
            <person name="Stewart A."/>
            <person name="Sgouros J.G."/>
            <person name="Peat N."/>
            <person name="Hayles J."/>
            <person name="Baker S.G."/>
            <person name="Basham D."/>
            <person name="Bowman S."/>
            <person name="Brooks K."/>
            <person name="Brown D."/>
            <person name="Brown S."/>
            <person name="Chillingworth T."/>
            <person name="Churcher C.M."/>
            <person name="Collins M."/>
            <person name="Connor R."/>
            <person name="Cronin A."/>
            <person name="Davis P."/>
            <person name="Feltwell T."/>
            <person name="Fraser A."/>
            <person name="Gentles S."/>
            <person name="Goble A."/>
            <person name="Hamlin N."/>
            <person name="Harris D.E."/>
            <person name="Hidalgo J."/>
            <person name="Hodgson G."/>
            <person name="Holroyd S."/>
            <person name="Hornsby T."/>
            <person name="Howarth S."/>
            <person name="Huckle E.J."/>
            <person name="Hunt S."/>
            <person name="Jagels K."/>
            <person name="James K.D."/>
            <person name="Jones L."/>
            <person name="Jones M."/>
            <person name="Leather S."/>
            <person name="McDonald S."/>
            <person name="McLean J."/>
            <person name="Mooney P."/>
            <person name="Moule S."/>
            <person name="Mungall K.L."/>
            <person name="Murphy L.D."/>
            <person name="Niblett D."/>
            <person name="Odell C."/>
            <person name="Oliver K."/>
            <person name="O'Neil S."/>
            <person name="Pearson D."/>
            <person name="Quail M.A."/>
            <person name="Rabbinowitsch E."/>
            <person name="Rutherford K.M."/>
            <person name="Rutter S."/>
            <person name="Saunders D."/>
            <person name="Seeger K."/>
            <person name="Sharp S."/>
            <person name="Skelton J."/>
            <person name="Simmonds M.N."/>
            <person name="Squares R."/>
            <person name="Squares S."/>
            <person name="Stevens K."/>
            <person name="Taylor K."/>
            <person name="Taylor R.G."/>
            <person name="Tivey A."/>
            <person name="Walsh S.V."/>
            <person name="Warren T."/>
            <person name="Whitehead S."/>
            <person name="Woodward J.R."/>
            <person name="Volckaert G."/>
            <person name="Aert R."/>
            <person name="Robben J."/>
            <person name="Grymonprez B."/>
            <person name="Weltjens I."/>
            <person name="Vanstreels E."/>
            <person name="Rieger M."/>
            <person name="Schaefer M."/>
            <person name="Mueller-Auer S."/>
            <person name="Gabel C."/>
            <person name="Fuchs M."/>
            <person name="Duesterhoeft A."/>
            <person name="Fritzc C."/>
            <person name="Holzer E."/>
            <person name="Moestl D."/>
            <person name="Hilbert H."/>
            <person name="Borzym K."/>
            <person name="Langer I."/>
            <person name="Beck A."/>
            <person name="Lehrach H."/>
            <person name="Reinhardt R."/>
            <person name="Pohl T.M."/>
            <person name="Eger P."/>
            <person name="Zimmermann W."/>
            <person name="Wedler H."/>
            <person name="Wambutt R."/>
            <person name="Purnelle B."/>
            <person name="Goffeau A."/>
            <person name="Cadieu E."/>
            <person name="Dreano S."/>
            <person name="Gloux S."/>
            <person name="Lelaure V."/>
            <person name="Mottier S."/>
            <person name="Galibert F."/>
            <person name="Aves S.J."/>
            <person name="Xiang Z."/>
            <person name="Hunt C."/>
            <person name="Moore K."/>
            <person name="Hurst S.M."/>
            <person name="Lucas M."/>
            <person name="Rochet M."/>
            <person name="Gaillardin C."/>
            <person name="Tallada V.A."/>
            <person name="Garzon A."/>
            <person name="Thode G."/>
            <person name="Daga R.R."/>
            <person name="Cruzado L."/>
            <person name="Jimenez J."/>
            <person name="Sanchez M."/>
            <person name="del Rey F."/>
            <person name="Benito J."/>
            <person name="Dominguez A."/>
            <person name="Revuelta J.L."/>
            <person name="Moreno S."/>
            <person name="Armstrong J."/>
            <person name="Forsburg S.L."/>
            <person name="Cerutti L."/>
            <person name="Lowe T."/>
            <person name="McCombie W.R."/>
            <person name="Paulsen I."/>
            <person name="Potashkin J."/>
            <person name="Shpakovski G.V."/>
            <person name="Ussery D."/>
            <person name="Barrell B.G."/>
            <person name="Nurse P."/>
        </authorList>
    </citation>
    <scope>NUCLEOTIDE SEQUENCE [LARGE SCALE GENOMIC DNA]</scope>
    <source>
        <strain>972 / ATCC 24843</strain>
    </source>
</reference>
<reference key="2">
    <citation type="journal article" date="2006" name="Nat. Biotechnol.">
        <title>ORFeome cloning and global analysis of protein localization in the fission yeast Schizosaccharomyces pombe.</title>
        <authorList>
            <person name="Matsuyama A."/>
            <person name="Arai R."/>
            <person name="Yashiroda Y."/>
            <person name="Shirai A."/>
            <person name="Kamata A."/>
            <person name="Sekido S."/>
            <person name="Kobayashi Y."/>
            <person name="Hashimoto A."/>
            <person name="Hamamoto M."/>
            <person name="Hiraoka Y."/>
            <person name="Horinouchi S."/>
            <person name="Yoshida M."/>
        </authorList>
    </citation>
    <scope>SUBCELLULAR LOCATION [LARGE SCALE ANALYSIS]</scope>
</reference>
<reference key="3">
    <citation type="journal article" date="2008" name="J. Proteome Res.">
        <title>Phosphoproteome analysis of fission yeast.</title>
        <authorList>
            <person name="Wilson-Grady J.T."/>
            <person name="Villen J."/>
            <person name="Gygi S.P."/>
        </authorList>
    </citation>
    <scope>PHOSPHORYLATION [LARGE SCALE ANALYSIS] AT SER-441</scope>
    <scope>IDENTIFICATION BY MASS SPECTROMETRY</scope>
</reference>
<keyword id="KW-0539">Nucleus</keyword>
<keyword id="KW-0597">Phosphoprotein</keyword>
<keyword id="KW-1185">Reference proteome</keyword>
<accession>O94589</accession>
<comment type="subcellular location">
    <subcellularLocation>
        <location evidence="2">Nucleus</location>
    </subcellularLocation>
</comment>
<sequence length="551" mass="61285">MDELLNVASHAATFATNFALKHSISFAGKLAVQQVSSYIKRASADDQSELESVKTQLLEMIRVVTPAIELIEIMSVGENENFKSTKQLVDSLHADIEQFTKHVLSAAHSEFPPSSEKETLQKNVDTSILREMKTLLLKINDAVPLLNLSITTSGASISSSLPKSTSFSQLLRANSYIYRANVAFTGNEPLQVGPTFFLRTYKIIDNHAKSGYISNDLVMWKEEMPVCIAKMFRMPPQRLKSKDTVLAYALSLKQSFDDDRYHDEDETPVTKTISLNDVRTLFFSLSGKLLRLDDVQTPVLLLKYADDETEYSSNTAPSNWIALEALPLVSIPNESLDESDELAESLSDSEAARLQLLGIKKQESVAKKKSSFPSTIKDQPNLTLLEYLIRLCALESTTQESVLQLPDEQIALYLKDYQGRERPRDPASYNALENRSELSASPGSVSSSRHSGIFATPTFLSPWNIKNIPLVTPEVSTRQTKNVDEEDSALLMASPSVRKSNLLPQEDLISKDSVIKLKENPSVIPHSEPESSSKVINCQAKLNVEKEKKNP</sequence>
<gene>
    <name type="ORF">SPCC584.03c</name>
</gene>
<protein>
    <recommendedName>
        <fullName>RanBD1 domain-containing protein C584.03c</fullName>
    </recommendedName>
</protein>
<feature type="chain" id="PRO_0000303895" description="RanBD1 domain-containing protein C584.03c">
    <location>
        <begin position="1"/>
        <end position="551"/>
    </location>
</feature>
<feature type="domain" description="RanBD1">
    <location>
        <begin position="1"/>
        <end position="309"/>
    </location>
</feature>
<feature type="region of interest" description="Disordered" evidence="1">
    <location>
        <begin position="522"/>
        <end position="551"/>
    </location>
</feature>
<feature type="modified residue" description="Phosphoserine" evidence="3">
    <location>
        <position position="441"/>
    </location>
</feature>
<proteinExistence type="evidence at protein level"/>